<feature type="chain" id="PRO_1000077468" description="Protease HtpX">
    <location>
        <begin position="1"/>
        <end position="280"/>
    </location>
</feature>
<feature type="transmembrane region" description="Helical" evidence="1">
    <location>
        <begin position="7"/>
        <end position="26"/>
    </location>
</feature>
<feature type="transmembrane region" description="Helical" evidence="1">
    <location>
        <begin position="30"/>
        <end position="49"/>
    </location>
</feature>
<feature type="transmembrane region" description="Helical" evidence="1">
    <location>
        <begin position="146"/>
        <end position="166"/>
    </location>
</feature>
<feature type="transmembrane region" description="Helical" evidence="1">
    <location>
        <begin position="178"/>
        <end position="198"/>
    </location>
</feature>
<feature type="active site" evidence="1">
    <location>
        <position position="130"/>
    </location>
</feature>
<feature type="binding site" evidence="1">
    <location>
        <position position="129"/>
    </location>
    <ligand>
        <name>Zn(2+)</name>
        <dbReference type="ChEBI" id="CHEBI:29105"/>
        <note>catalytic</note>
    </ligand>
</feature>
<feature type="binding site" evidence="1">
    <location>
        <position position="133"/>
    </location>
    <ligand>
        <name>Zn(2+)</name>
        <dbReference type="ChEBI" id="CHEBI:29105"/>
        <note>catalytic</note>
    </ligand>
</feature>
<feature type="binding site" evidence="1">
    <location>
        <position position="203"/>
    </location>
    <ligand>
        <name>Zn(2+)</name>
        <dbReference type="ChEBI" id="CHEBI:29105"/>
        <note>catalytic</note>
    </ligand>
</feature>
<dbReference type="EC" id="3.4.24.-" evidence="1"/>
<dbReference type="EMBL" id="AE017354">
    <property type="protein sequence ID" value="AAU26287.1"/>
    <property type="molecule type" value="Genomic_DNA"/>
</dbReference>
<dbReference type="RefSeq" id="WP_010945941.1">
    <property type="nucleotide sequence ID" value="NC_002942.5"/>
</dbReference>
<dbReference type="RefSeq" id="YP_094234.1">
    <property type="nucleotide sequence ID" value="NC_002942.5"/>
</dbReference>
<dbReference type="STRING" id="272624.lpg0180"/>
<dbReference type="PaxDb" id="272624-lpg0180"/>
<dbReference type="DNASU" id="3079815"/>
<dbReference type="GeneID" id="57034189"/>
<dbReference type="KEGG" id="lpn:lpg0180"/>
<dbReference type="PATRIC" id="fig|272624.6.peg.192"/>
<dbReference type="eggNOG" id="COG0501">
    <property type="taxonomic scope" value="Bacteria"/>
</dbReference>
<dbReference type="HOGENOM" id="CLU_042266_3_0_6"/>
<dbReference type="OrthoDB" id="15218at2"/>
<dbReference type="Proteomes" id="UP000000609">
    <property type="component" value="Chromosome"/>
</dbReference>
<dbReference type="GO" id="GO:0005886">
    <property type="term" value="C:plasma membrane"/>
    <property type="evidence" value="ECO:0007669"/>
    <property type="project" value="UniProtKB-SubCell"/>
</dbReference>
<dbReference type="GO" id="GO:0004222">
    <property type="term" value="F:metalloendopeptidase activity"/>
    <property type="evidence" value="ECO:0007669"/>
    <property type="project" value="UniProtKB-UniRule"/>
</dbReference>
<dbReference type="GO" id="GO:0008270">
    <property type="term" value="F:zinc ion binding"/>
    <property type="evidence" value="ECO:0007669"/>
    <property type="project" value="UniProtKB-UniRule"/>
</dbReference>
<dbReference type="GO" id="GO:0006508">
    <property type="term" value="P:proteolysis"/>
    <property type="evidence" value="ECO:0007669"/>
    <property type="project" value="UniProtKB-KW"/>
</dbReference>
<dbReference type="CDD" id="cd07336">
    <property type="entry name" value="M48B_HtpX_like"/>
    <property type="match status" value="1"/>
</dbReference>
<dbReference type="Gene3D" id="3.30.2010.10">
    <property type="entry name" value="Metalloproteases ('zincins'), catalytic domain"/>
    <property type="match status" value="1"/>
</dbReference>
<dbReference type="HAMAP" id="MF_00188">
    <property type="entry name" value="Pept_M48_protease_HtpX"/>
    <property type="match status" value="1"/>
</dbReference>
<dbReference type="InterPro" id="IPR050083">
    <property type="entry name" value="HtpX_protease"/>
</dbReference>
<dbReference type="InterPro" id="IPR022919">
    <property type="entry name" value="Pept_M48_protease_HtpX"/>
</dbReference>
<dbReference type="InterPro" id="IPR001915">
    <property type="entry name" value="Peptidase_M48"/>
</dbReference>
<dbReference type="NCBIfam" id="NF002826">
    <property type="entry name" value="PRK03001.1"/>
    <property type="match status" value="1"/>
</dbReference>
<dbReference type="PANTHER" id="PTHR43221">
    <property type="entry name" value="PROTEASE HTPX"/>
    <property type="match status" value="1"/>
</dbReference>
<dbReference type="PANTHER" id="PTHR43221:SF1">
    <property type="entry name" value="PROTEASE HTPX"/>
    <property type="match status" value="1"/>
</dbReference>
<dbReference type="Pfam" id="PF01435">
    <property type="entry name" value="Peptidase_M48"/>
    <property type="match status" value="1"/>
</dbReference>
<dbReference type="PROSITE" id="PS00142">
    <property type="entry name" value="ZINC_PROTEASE"/>
    <property type="match status" value="1"/>
</dbReference>
<protein>
    <recommendedName>
        <fullName evidence="1">Protease HtpX</fullName>
        <ecNumber evidence="1">3.4.24.-</ecNumber>
    </recommendedName>
    <alternativeName>
        <fullName evidence="1">Heat shock protein HtpX</fullName>
    </alternativeName>
</protein>
<organism>
    <name type="scientific">Legionella pneumophila subsp. pneumophila (strain Philadelphia 1 / ATCC 33152 / DSM 7513)</name>
    <dbReference type="NCBI Taxonomy" id="272624"/>
    <lineage>
        <taxon>Bacteria</taxon>
        <taxon>Pseudomonadati</taxon>
        <taxon>Pseudomonadota</taxon>
        <taxon>Gammaproteobacteria</taxon>
        <taxon>Legionellales</taxon>
        <taxon>Legionellaceae</taxon>
        <taxon>Legionella</taxon>
    </lineage>
</organism>
<keyword id="KW-0997">Cell inner membrane</keyword>
<keyword id="KW-1003">Cell membrane</keyword>
<keyword id="KW-0378">Hydrolase</keyword>
<keyword id="KW-0472">Membrane</keyword>
<keyword id="KW-0479">Metal-binding</keyword>
<keyword id="KW-0482">Metalloprotease</keyword>
<keyword id="KW-0645">Protease</keyword>
<keyword id="KW-1185">Reference proteome</keyword>
<keyword id="KW-0346">Stress response</keyword>
<keyword id="KW-0812">Transmembrane</keyword>
<keyword id="KW-1133">Transmembrane helix</keyword>
<keyword id="KW-0862">Zinc</keyword>
<sequence length="280" mass="30255">MINNLKTFILLASLTALLVVIGGLLGGSTGMLIALVFAGVMNFSAYWYSDVLVLKMYNAEPLPNNHFVNNIISELAHRAGTPVPKVYLINNSTPNAFATGRNPENASIAVTTGLLDRLTQEEITGVLAHELAHVIHRDTLINVVSATIAGAISGIANMFMWLSMFGHNSNNEEGVHPVVGMIMMIVAPLAAGLIQMAISRSREFEADAGGARISGNPQWLASALLKLDQANHEQYFDEAETHPSTAHLFIINPLNGEKLANLFSTHPSTAERVARLRAMY</sequence>
<evidence type="ECO:0000255" key="1">
    <source>
        <dbReference type="HAMAP-Rule" id="MF_00188"/>
    </source>
</evidence>
<comment type="cofactor">
    <cofactor evidence="1">
        <name>Zn(2+)</name>
        <dbReference type="ChEBI" id="CHEBI:29105"/>
    </cofactor>
    <text evidence="1">Binds 1 zinc ion per subunit.</text>
</comment>
<comment type="subcellular location">
    <subcellularLocation>
        <location evidence="1">Cell inner membrane</location>
        <topology evidence="1">Multi-pass membrane protein</topology>
    </subcellularLocation>
</comment>
<comment type="similarity">
    <text evidence="1">Belongs to the peptidase M48B family.</text>
</comment>
<gene>
    <name evidence="1" type="primary">htpX</name>
    <name type="ordered locus">lpg0180</name>
</gene>
<name>HTPX_LEGPH</name>
<proteinExistence type="inferred from homology"/>
<accession>Q5ZZ31</accession>
<reference key="1">
    <citation type="journal article" date="2004" name="Science">
        <title>The genomic sequence of the accidental pathogen Legionella pneumophila.</title>
        <authorList>
            <person name="Chien M."/>
            <person name="Morozova I."/>
            <person name="Shi S."/>
            <person name="Sheng H."/>
            <person name="Chen J."/>
            <person name="Gomez S.M."/>
            <person name="Asamani G."/>
            <person name="Hill K."/>
            <person name="Nuara J."/>
            <person name="Feder M."/>
            <person name="Rineer J."/>
            <person name="Greenberg J.J."/>
            <person name="Steshenko V."/>
            <person name="Park S.H."/>
            <person name="Zhao B."/>
            <person name="Teplitskaya E."/>
            <person name="Edwards J.R."/>
            <person name="Pampou S."/>
            <person name="Georghiou A."/>
            <person name="Chou I.-C."/>
            <person name="Iannuccilli W."/>
            <person name="Ulz M.E."/>
            <person name="Kim D.H."/>
            <person name="Geringer-Sameth A."/>
            <person name="Goldsberry C."/>
            <person name="Morozov P."/>
            <person name="Fischer S.G."/>
            <person name="Segal G."/>
            <person name="Qu X."/>
            <person name="Rzhetsky A."/>
            <person name="Zhang P."/>
            <person name="Cayanis E."/>
            <person name="De Jong P.J."/>
            <person name="Ju J."/>
            <person name="Kalachikov S."/>
            <person name="Shuman H.A."/>
            <person name="Russo J.J."/>
        </authorList>
    </citation>
    <scope>NUCLEOTIDE SEQUENCE [LARGE SCALE GENOMIC DNA]</scope>
    <source>
        <strain>Philadelphia 1 / ATCC 33152 / DSM 7513</strain>
    </source>
</reference>